<accession>P63143</accession>
<accession>P97380</accession>
<accession>Q61763</accession>
<accession>Q63277</accession>
<accession>Q91WM5</accession>
<organism>
    <name type="scientific">Mus musculus</name>
    <name type="common">Mouse</name>
    <dbReference type="NCBI Taxonomy" id="10090"/>
    <lineage>
        <taxon>Eukaryota</taxon>
        <taxon>Metazoa</taxon>
        <taxon>Chordata</taxon>
        <taxon>Craniata</taxon>
        <taxon>Vertebrata</taxon>
        <taxon>Euteleostomi</taxon>
        <taxon>Mammalia</taxon>
        <taxon>Eutheria</taxon>
        <taxon>Euarchontoglires</taxon>
        <taxon>Glires</taxon>
        <taxon>Rodentia</taxon>
        <taxon>Myomorpha</taxon>
        <taxon>Muroidea</taxon>
        <taxon>Muridae</taxon>
        <taxon>Murinae</taxon>
        <taxon>Mus</taxon>
        <taxon>Mus</taxon>
    </lineage>
</organism>
<gene>
    <name evidence="10" type="primary">Kcnab1</name>
    <name type="synonym">Kvb1</name>
</gene>
<sequence>MQVSIACTEHNLKSRNGEDRLLSKQSSNAPNVVNAARAKFRTVAIIARSLGTFTPQHHISLKESTAKQTGMKYRNLGKSGLRVSCLGLGTWVTFGGQISDEVAERLMTIAYESGVNLFDTAEVYAAGKAEVILGSIIKKKGWRRSSLVITTKLYWGGKAETERGLSRKHIIEGLKGSLQRLQLEYVDVVFANRPDSNTPMEEIVRAMTHVINQGMAMYWGTSRWSAMEIMEAYSVARQFNMIPPVCEQAEYHLFQREKVEVQLPELYHKIGVGAMTWSPLACGIISGKYGNGVPESSRASLKCYQWLKERIVSEEGRKQQNKLKDLSPIAERLGCTLPQLAVAWCLRNEGVSSVLLGSSTPEQLIENLGAIQVLPKMTSHVVNEIDNILRNKPYSKKDYRS</sequence>
<comment type="function">
    <text evidence="2 3 4">Regulatory subunit of the voltage-gated potassium (Kv) Shaker channels composed of pore-forming and potassium-conducting alpha subunits and of regulatory beta subunits (PubMed:10454353). The beta-1/KCNAB1 cytoplasmic subunit mediates closure of delayed rectifier potassium channels by physically obstructing the pore via its N-terminal domain and increases the speed of channel closure for other family members. Promotes the inactivation of KCNA1, KCNA2, KCNA4, KCNA5 and KCNA6 alpha subunit-containing channels (By similarity). Displays nicotinamide adenine dinucleotide phosphate (NADPH)-dependent aldoketoreductase activity by catalyzing the NADPH-dependent reduction of a variety of endogenous aldehydes and ketones (By similarity). The binding of NADPH is required for efficient down-regulation of potassium channel activity (By similarity). Oxidation of the bound NADPH restrains N-terminal domain from blocking the channel, thereby decreasing N-type inactivation of potassium channel activity (By similarity).</text>
</comment>
<comment type="catalytic activity">
    <reaction evidence="2">
        <text>a primary alcohol + NADP(+) = an aldehyde + NADPH + H(+)</text>
        <dbReference type="Rhea" id="RHEA:15937"/>
        <dbReference type="ChEBI" id="CHEBI:15378"/>
        <dbReference type="ChEBI" id="CHEBI:15734"/>
        <dbReference type="ChEBI" id="CHEBI:17478"/>
        <dbReference type="ChEBI" id="CHEBI:57783"/>
        <dbReference type="ChEBI" id="CHEBI:58349"/>
    </reaction>
    <physiologicalReaction direction="right-to-left" evidence="2">
        <dbReference type="Rhea" id="RHEA:15939"/>
    </physiologicalReaction>
</comment>
<comment type="catalytic activity">
    <reaction evidence="2">
        <text>a secondary alcohol + NADP(+) = a ketone + NADPH + H(+)</text>
        <dbReference type="Rhea" id="RHEA:19257"/>
        <dbReference type="ChEBI" id="CHEBI:15378"/>
        <dbReference type="ChEBI" id="CHEBI:17087"/>
        <dbReference type="ChEBI" id="CHEBI:35681"/>
        <dbReference type="ChEBI" id="CHEBI:57783"/>
        <dbReference type="ChEBI" id="CHEBI:58349"/>
    </reaction>
    <physiologicalReaction direction="right-to-left" evidence="2">
        <dbReference type="Rhea" id="RHEA:19259"/>
    </physiologicalReaction>
</comment>
<comment type="subunit">
    <text evidence="2 3 9">Homotetramer (By similarity). Interaction with tetrameric potassium channel alpha subunits gives rise to a heterooctamer (Probable). Identified in potassium channel complexes containing KCNA1, KCNA2, KCNA4, KCNA5, KCNA6, KCNAB1 and KCNAB2 (By similarity). Part of a complex containing KCNA1, KCNA4 and LGI1; interaction with LGI1 inhibits down-regulation of KCNA1 channel activity (By similarity). Interacts with the dimer formed by GNB1 and GNG2; this enhances KCNA1 binding (By similarity). Interacts with SQSTM (By similarity).</text>
</comment>
<comment type="subcellular location">
    <subcellularLocation>
        <location evidence="3">Cytoplasm</location>
    </subcellularLocation>
    <subcellularLocation>
        <location evidence="2">Membrane</location>
        <topology evidence="2">Peripheral membrane protein</topology>
        <orientation evidence="2">Cytoplasmic side</orientation>
    </subcellularLocation>
    <subcellularLocation>
        <location evidence="3">Cell membrane</location>
        <topology evidence="3">Peripheral membrane protein</topology>
        <orientation evidence="3">Cytoplasmic side</orientation>
    </subcellularLocation>
    <text evidence="3">Recruited to the cytoplasmic side of the cell membrane via its interaction with pore-forming potassium channel alpha subunits.</text>
</comment>
<comment type="tissue specificity">
    <text evidence="4 7 8">Detected in brain, in hippocampus and striatum (at protein level) (PubMed:10454353). Predominantly expressed in brain (PubMed:10454353, PubMed:8824288, PubMed:9468385). No expression found in heart, skeletal muscle or kidney. In the late embryonic and early neonatal brain, highly expressed in hippocampus, cerebral cortex, caudate putamen, colliculus and cerebellum (PubMed:10454353, PubMed:9468385).</text>
</comment>
<comment type="developmental stage">
    <text evidence="8">Expressed from embryonic day 16. Expressed throughout embryonic development, in neonate and in adult.</text>
</comment>
<comment type="domain">
    <text evidence="2">The N-terminal domain of the beta subunit mediates closure of delayed rectifier potassium channels by physically obstructing the pore.</text>
</comment>
<comment type="disruption phenotype">
    <text evidence="4 5 6">Mutant mice show subtle defects in learning (PubMed:10454353). Such learning impairments are not detectable in older mice and are not observed when mice are kept in a stimulating environment (PubMed:14511342, PubMed:15530391).</text>
</comment>
<comment type="similarity">
    <text evidence="9">Belongs to the shaker potassium channel beta subunit family.</text>
</comment>
<evidence type="ECO:0000250" key="1">
    <source>
        <dbReference type="UniProtKB" id="P62483"/>
    </source>
</evidence>
<evidence type="ECO:0000250" key="2">
    <source>
        <dbReference type="UniProtKB" id="P63144"/>
    </source>
</evidence>
<evidence type="ECO:0000250" key="3">
    <source>
        <dbReference type="UniProtKB" id="Q14722"/>
    </source>
</evidence>
<evidence type="ECO:0000269" key="4">
    <source>
    </source>
</evidence>
<evidence type="ECO:0000269" key="5">
    <source>
    </source>
</evidence>
<evidence type="ECO:0000269" key="6">
    <source>
    </source>
</evidence>
<evidence type="ECO:0000269" key="7">
    <source>
    </source>
</evidence>
<evidence type="ECO:0000269" key="8">
    <source>
    </source>
</evidence>
<evidence type="ECO:0000305" key="9"/>
<evidence type="ECO:0000312" key="10">
    <source>
        <dbReference type="MGI" id="MGI:109155"/>
    </source>
</evidence>
<name>KCAB1_MOUSE</name>
<proteinExistence type="evidence at protein level"/>
<protein>
    <recommendedName>
        <fullName>Voltage-gated potassium channel subunit beta-1</fullName>
        <ecNumber evidence="2">1.1.1.-</ecNumber>
    </recommendedName>
    <alternativeName>
        <fullName>K(+) channel subunit beta-1</fullName>
    </alternativeName>
    <alternativeName>
        <fullName>Kv-beta-1</fullName>
    </alternativeName>
</protein>
<reference key="1">
    <citation type="journal article" date="1998" name="J. Neurobiol.">
        <title>Mouse brain potassium channel beta1 subunit mRNA: cloning and distribution during development.</title>
        <authorList>
            <person name="Butler D.M."/>
            <person name="Ono J.K."/>
            <person name="Chang T."/>
            <person name="McCaman R.E."/>
            <person name="Barish M.E."/>
        </authorList>
    </citation>
    <scope>NUCLEOTIDE SEQUENCE [MRNA]</scope>
    <scope>DEVELOPMENTAL STAGE</scope>
    <scope>TISSUE SPECIFICITY</scope>
    <source>
        <strain>Swiss Webster</strain>
        <tissue>Hippocampus</tissue>
    </source>
</reference>
<reference key="2">
    <citation type="journal article" date="1996" name="J. Biol. Chem.">
        <title>A new K+ channel beta subunit to specifically enhance Kv2.2 (CDRK) expression.</title>
        <authorList>
            <person name="Fink M."/>
            <person name="Duprat F."/>
            <person name="Lesage F."/>
            <person name="Heurteaux C."/>
            <person name="Romey G."/>
            <person name="Barhanin J."/>
            <person name="Lazdunski M."/>
        </authorList>
    </citation>
    <scope>NUCLEOTIDE SEQUENCE [MRNA]</scope>
    <scope>TISSUE SPECIFICITY</scope>
    <source>
        <tissue>Brain</tissue>
    </source>
</reference>
<reference key="3">
    <citation type="submission" date="1996-08" db="EMBL/GenBank/DDBJ databases">
        <title>Expression of a potassium channel beta-subunit in mouse fibroblasts.</title>
        <authorList>
            <person name="Metzler M."/>
            <person name="Repp R."/>
            <person name="Kreuder J."/>
            <person name="Borkhardt A."/>
            <person name="Koschinski A."/>
            <person name="Lampert F."/>
            <person name="Dreyer F."/>
            <person name="Repp H."/>
        </authorList>
    </citation>
    <scope>NUCLEOTIDE SEQUENCE [MRNA]</scope>
    <source>
        <strain>BALB/cJ</strain>
    </source>
</reference>
<reference key="4">
    <citation type="journal article" date="2005" name="Science">
        <title>The transcriptional landscape of the mammalian genome.</title>
        <authorList>
            <person name="Carninci P."/>
            <person name="Kasukawa T."/>
            <person name="Katayama S."/>
            <person name="Gough J."/>
            <person name="Frith M.C."/>
            <person name="Maeda N."/>
            <person name="Oyama R."/>
            <person name="Ravasi T."/>
            <person name="Lenhard B."/>
            <person name="Wells C."/>
            <person name="Kodzius R."/>
            <person name="Shimokawa K."/>
            <person name="Bajic V.B."/>
            <person name="Brenner S.E."/>
            <person name="Batalov S."/>
            <person name="Forrest A.R."/>
            <person name="Zavolan M."/>
            <person name="Davis M.J."/>
            <person name="Wilming L.G."/>
            <person name="Aidinis V."/>
            <person name="Allen J.E."/>
            <person name="Ambesi-Impiombato A."/>
            <person name="Apweiler R."/>
            <person name="Aturaliya R.N."/>
            <person name="Bailey T.L."/>
            <person name="Bansal M."/>
            <person name="Baxter L."/>
            <person name="Beisel K.W."/>
            <person name="Bersano T."/>
            <person name="Bono H."/>
            <person name="Chalk A.M."/>
            <person name="Chiu K.P."/>
            <person name="Choudhary V."/>
            <person name="Christoffels A."/>
            <person name="Clutterbuck D.R."/>
            <person name="Crowe M.L."/>
            <person name="Dalla E."/>
            <person name="Dalrymple B.P."/>
            <person name="de Bono B."/>
            <person name="Della Gatta G."/>
            <person name="di Bernardo D."/>
            <person name="Down T."/>
            <person name="Engstrom P."/>
            <person name="Fagiolini M."/>
            <person name="Faulkner G."/>
            <person name="Fletcher C.F."/>
            <person name="Fukushima T."/>
            <person name="Furuno M."/>
            <person name="Futaki S."/>
            <person name="Gariboldi M."/>
            <person name="Georgii-Hemming P."/>
            <person name="Gingeras T.R."/>
            <person name="Gojobori T."/>
            <person name="Green R.E."/>
            <person name="Gustincich S."/>
            <person name="Harbers M."/>
            <person name="Hayashi Y."/>
            <person name="Hensch T.K."/>
            <person name="Hirokawa N."/>
            <person name="Hill D."/>
            <person name="Huminiecki L."/>
            <person name="Iacono M."/>
            <person name="Ikeo K."/>
            <person name="Iwama A."/>
            <person name="Ishikawa T."/>
            <person name="Jakt M."/>
            <person name="Kanapin A."/>
            <person name="Katoh M."/>
            <person name="Kawasawa Y."/>
            <person name="Kelso J."/>
            <person name="Kitamura H."/>
            <person name="Kitano H."/>
            <person name="Kollias G."/>
            <person name="Krishnan S.P."/>
            <person name="Kruger A."/>
            <person name="Kummerfeld S.K."/>
            <person name="Kurochkin I.V."/>
            <person name="Lareau L.F."/>
            <person name="Lazarevic D."/>
            <person name="Lipovich L."/>
            <person name="Liu J."/>
            <person name="Liuni S."/>
            <person name="McWilliam S."/>
            <person name="Madan Babu M."/>
            <person name="Madera M."/>
            <person name="Marchionni L."/>
            <person name="Matsuda H."/>
            <person name="Matsuzawa S."/>
            <person name="Miki H."/>
            <person name="Mignone F."/>
            <person name="Miyake S."/>
            <person name="Morris K."/>
            <person name="Mottagui-Tabar S."/>
            <person name="Mulder N."/>
            <person name="Nakano N."/>
            <person name="Nakauchi H."/>
            <person name="Ng P."/>
            <person name="Nilsson R."/>
            <person name="Nishiguchi S."/>
            <person name="Nishikawa S."/>
            <person name="Nori F."/>
            <person name="Ohara O."/>
            <person name="Okazaki Y."/>
            <person name="Orlando V."/>
            <person name="Pang K.C."/>
            <person name="Pavan W.J."/>
            <person name="Pavesi G."/>
            <person name="Pesole G."/>
            <person name="Petrovsky N."/>
            <person name="Piazza S."/>
            <person name="Reed J."/>
            <person name="Reid J.F."/>
            <person name="Ring B.Z."/>
            <person name="Ringwald M."/>
            <person name="Rost B."/>
            <person name="Ruan Y."/>
            <person name="Salzberg S.L."/>
            <person name="Sandelin A."/>
            <person name="Schneider C."/>
            <person name="Schoenbach C."/>
            <person name="Sekiguchi K."/>
            <person name="Semple C.A."/>
            <person name="Seno S."/>
            <person name="Sessa L."/>
            <person name="Sheng Y."/>
            <person name="Shibata Y."/>
            <person name="Shimada H."/>
            <person name="Shimada K."/>
            <person name="Silva D."/>
            <person name="Sinclair B."/>
            <person name="Sperling S."/>
            <person name="Stupka E."/>
            <person name="Sugiura K."/>
            <person name="Sultana R."/>
            <person name="Takenaka Y."/>
            <person name="Taki K."/>
            <person name="Tammoja K."/>
            <person name="Tan S.L."/>
            <person name="Tang S."/>
            <person name="Taylor M.S."/>
            <person name="Tegner J."/>
            <person name="Teichmann S.A."/>
            <person name="Ueda H.R."/>
            <person name="van Nimwegen E."/>
            <person name="Verardo R."/>
            <person name="Wei C.L."/>
            <person name="Yagi K."/>
            <person name="Yamanishi H."/>
            <person name="Zabarovsky E."/>
            <person name="Zhu S."/>
            <person name="Zimmer A."/>
            <person name="Hide W."/>
            <person name="Bult C."/>
            <person name="Grimmond S.M."/>
            <person name="Teasdale R.D."/>
            <person name="Liu E.T."/>
            <person name="Brusic V."/>
            <person name="Quackenbush J."/>
            <person name="Wahlestedt C."/>
            <person name="Mattick J.S."/>
            <person name="Hume D.A."/>
            <person name="Kai C."/>
            <person name="Sasaki D."/>
            <person name="Tomaru Y."/>
            <person name="Fukuda S."/>
            <person name="Kanamori-Katayama M."/>
            <person name="Suzuki M."/>
            <person name="Aoki J."/>
            <person name="Arakawa T."/>
            <person name="Iida J."/>
            <person name="Imamura K."/>
            <person name="Itoh M."/>
            <person name="Kato T."/>
            <person name="Kawaji H."/>
            <person name="Kawagashira N."/>
            <person name="Kawashima T."/>
            <person name="Kojima M."/>
            <person name="Kondo S."/>
            <person name="Konno H."/>
            <person name="Nakano K."/>
            <person name="Ninomiya N."/>
            <person name="Nishio T."/>
            <person name="Okada M."/>
            <person name="Plessy C."/>
            <person name="Shibata K."/>
            <person name="Shiraki T."/>
            <person name="Suzuki S."/>
            <person name="Tagami M."/>
            <person name="Waki K."/>
            <person name="Watahiki A."/>
            <person name="Okamura-Oho Y."/>
            <person name="Suzuki H."/>
            <person name="Kawai J."/>
            <person name="Hayashizaki Y."/>
        </authorList>
    </citation>
    <scope>NUCLEOTIDE SEQUENCE [LARGE SCALE MRNA]</scope>
    <source>
        <strain>C57BL/6J</strain>
        <tissue>Spinal cord</tissue>
    </source>
</reference>
<reference key="5">
    <citation type="submission" date="2005-09" db="EMBL/GenBank/DDBJ databases">
        <authorList>
            <person name="Mural R.J."/>
            <person name="Adams M.D."/>
            <person name="Myers E.W."/>
            <person name="Smith H.O."/>
            <person name="Venter J.C."/>
        </authorList>
    </citation>
    <scope>NUCLEOTIDE SEQUENCE [LARGE SCALE GENOMIC DNA]</scope>
</reference>
<reference key="6">
    <citation type="journal article" date="2004" name="Genome Res.">
        <title>The status, quality, and expansion of the NIH full-length cDNA project: the Mammalian Gene Collection (MGC).</title>
        <authorList>
            <consortium name="The MGC Project Team"/>
        </authorList>
    </citation>
    <scope>NUCLEOTIDE SEQUENCE [LARGE SCALE MRNA]</scope>
    <source>
        <tissue>Eye</tissue>
    </source>
</reference>
<reference key="7">
    <citation type="journal article" date="1998" name="Learn. Memory">
        <title>Reduced K+ channel inactivation, spike broadening, and after-hyperpolarization in Kvbeta1.1-deficient mice with impaired learning.</title>
        <authorList>
            <person name="Giese K.P."/>
            <person name="Storm J.F."/>
            <person name="Reuter D."/>
            <person name="Fedorov N.B."/>
            <person name="Shao L.R."/>
            <person name="Leicher T."/>
            <person name="Pongs O."/>
            <person name="Silva A.J."/>
        </authorList>
    </citation>
    <scope>FUNCTION</scope>
    <scope>DISRUPTION PHENOTYPE</scope>
    <scope>TISSUE SPECIFICITY</scope>
</reference>
<reference key="8">
    <citation type="journal article" date="2003" name="Eur. J. Neurosci.">
        <title>Learning and memory impairments in Kv beta 1.1-null mutants are rescued by environmental enrichment or ageing.</title>
        <authorList>
            <person name="Need A.C."/>
            <person name="Irvine E.E."/>
            <person name="Giese K.P."/>
        </authorList>
    </citation>
    <scope>DISRUPTION PHENOTYPE</scope>
</reference>
<reference key="9">
    <citation type="journal article" date="2004" name="Curr. Biol.">
        <title>Increased neuronal excitability, synaptic plasticity, and learning in aged Kvbeta1.1 knockout mice.</title>
        <authorList>
            <person name="Murphy G.G."/>
            <person name="Fedorov N.B."/>
            <person name="Giese K.P."/>
            <person name="Ohno M."/>
            <person name="Friedman E."/>
            <person name="Chen R."/>
            <person name="Silva A.J."/>
        </authorList>
    </citation>
    <scope>DISRUPTION PHENOTYPE</scope>
</reference>
<reference key="10">
    <citation type="journal article" date="2010" name="Cell">
        <title>A tissue-specific atlas of mouse protein phosphorylation and expression.</title>
        <authorList>
            <person name="Huttlin E.L."/>
            <person name="Jedrychowski M.P."/>
            <person name="Elias J.E."/>
            <person name="Goswami T."/>
            <person name="Rad R."/>
            <person name="Beausoleil S.A."/>
            <person name="Villen J."/>
            <person name="Haas W."/>
            <person name="Sowa M.E."/>
            <person name="Gygi S.P."/>
        </authorList>
    </citation>
    <scope>IDENTIFICATION BY MASS SPECTROMETRY [LARGE SCALE ANALYSIS]</scope>
    <source>
        <tissue>Brain</tissue>
    </source>
</reference>
<keyword id="KW-1003">Cell membrane</keyword>
<keyword id="KW-0963">Cytoplasm</keyword>
<keyword id="KW-0406">Ion transport</keyword>
<keyword id="KW-0472">Membrane</keyword>
<keyword id="KW-0521">NADP</keyword>
<keyword id="KW-0560">Oxidoreductase</keyword>
<keyword id="KW-0630">Potassium</keyword>
<keyword id="KW-0633">Potassium transport</keyword>
<keyword id="KW-1185">Reference proteome</keyword>
<keyword id="KW-0813">Transport</keyword>
<feature type="chain" id="PRO_0000148740" description="Voltage-gated potassium channel subunit beta-1">
    <location>
        <begin position="1"/>
        <end position="401"/>
    </location>
</feature>
<feature type="active site" description="Proton donor/acceptor" evidence="1">
    <location>
        <position position="124"/>
    </location>
</feature>
<feature type="binding site" evidence="1">
    <location>
        <position position="90"/>
    </location>
    <ligand>
        <name>NADP(+)</name>
        <dbReference type="ChEBI" id="CHEBI:58349"/>
    </ligand>
</feature>
<feature type="binding site" evidence="1">
    <location>
        <position position="91"/>
    </location>
    <ligand>
        <name>NADP(+)</name>
        <dbReference type="ChEBI" id="CHEBI:58349"/>
    </ligand>
</feature>
<feature type="binding site" evidence="1">
    <location>
        <position position="97"/>
    </location>
    <ligand>
        <name>NADP(+)</name>
        <dbReference type="ChEBI" id="CHEBI:58349"/>
    </ligand>
</feature>
<feature type="binding site" evidence="1">
    <location>
        <position position="119"/>
    </location>
    <ligand>
        <name>NADP(+)</name>
        <dbReference type="ChEBI" id="CHEBI:58349"/>
    </ligand>
</feature>
<feature type="binding site" evidence="1">
    <location>
        <position position="192"/>
    </location>
    <ligand>
        <name>NADP(+)</name>
        <dbReference type="ChEBI" id="CHEBI:58349"/>
    </ligand>
</feature>
<feature type="binding site" evidence="1">
    <location>
        <position position="222"/>
    </location>
    <ligand>
        <name>NADP(+)</name>
        <dbReference type="ChEBI" id="CHEBI:58349"/>
    </ligand>
</feature>
<feature type="binding site" evidence="1">
    <location>
        <position position="223"/>
    </location>
    <ligand>
        <name>NADP(+)</name>
        <dbReference type="ChEBI" id="CHEBI:58349"/>
    </ligand>
</feature>
<feature type="binding site" evidence="1">
    <location>
        <position position="248"/>
    </location>
    <ligand>
        <name>NADP(+)</name>
        <dbReference type="ChEBI" id="CHEBI:58349"/>
    </ligand>
</feature>
<feature type="binding site" evidence="1">
    <location>
        <position position="277"/>
    </location>
    <ligand>
        <name>NADP(+)</name>
        <dbReference type="ChEBI" id="CHEBI:58349"/>
    </ligand>
</feature>
<feature type="binding site" evidence="1">
    <location>
        <position position="278"/>
    </location>
    <ligand>
        <name>NADP(+)</name>
        <dbReference type="ChEBI" id="CHEBI:58349"/>
    </ligand>
</feature>
<feature type="binding site" evidence="1">
    <location>
        <position position="279"/>
    </location>
    <ligand>
        <name>NADP(+)</name>
        <dbReference type="ChEBI" id="CHEBI:58349"/>
    </ligand>
</feature>
<feature type="binding site" evidence="1">
    <location>
        <position position="280"/>
    </location>
    <ligand>
        <name>NADP(+)</name>
        <dbReference type="ChEBI" id="CHEBI:58349"/>
    </ligand>
</feature>
<feature type="binding site" evidence="1">
    <location>
        <position position="281"/>
    </location>
    <ligand>
        <name>NADP(+)</name>
        <dbReference type="ChEBI" id="CHEBI:58349"/>
    </ligand>
</feature>
<feature type="binding site" evidence="1">
    <location>
        <position position="282"/>
    </location>
    <ligand>
        <name>NADP(+)</name>
        <dbReference type="ChEBI" id="CHEBI:58349"/>
    </ligand>
</feature>
<feature type="binding site" evidence="1">
    <location>
        <position position="288"/>
    </location>
    <ligand>
        <name>NADP(+)</name>
        <dbReference type="ChEBI" id="CHEBI:58349"/>
    </ligand>
</feature>
<feature type="binding site" evidence="1">
    <location>
        <position position="298"/>
    </location>
    <ligand>
        <name>NADP(+)</name>
        <dbReference type="ChEBI" id="CHEBI:58349"/>
    </ligand>
</feature>
<feature type="binding site" evidence="1">
    <location>
        <position position="357"/>
    </location>
    <ligand>
        <name>NADP(+)</name>
        <dbReference type="ChEBI" id="CHEBI:58349"/>
    </ligand>
</feature>
<feature type="binding site" evidence="1">
    <location>
        <position position="359"/>
    </location>
    <ligand>
        <name>NADP(+)</name>
        <dbReference type="ChEBI" id="CHEBI:58349"/>
    </ligand>
</feature>
<feature type="binding site" evidence="1">
    <location>
        <position position="363"/>
    </location>
    <ligand>
        <name>NADP(+)</name>
        <dbReference type="ChEBI" id="CHEBI:58349"/>
    </ligand>
</feature>
<feature type="binding site" evidence="1">
    <location>
        <position position="366"/>
    </location>
    <ligand>
        <name>NADP(+)</name>
        <dbReference type="ChEBI" id="CHEBI:58349"/>
    </ligand>
</feature>
<feature type="binding site" evidence="1">
    <location>
        <position position="367"/>
    </location>
    <ligand>
        <name>NADP(+)</name>
        <dbReference type="ChEBI" id="CHEBI:58349"/>
    </ligand>
</feature>
<feature type="sequence conflict" description="In Ref. 1; AAB87085 and 3; CAA65936." evidence="9" ref="1 3">
    <original>N</original>
    <variation>T</variation>
    <location>
        <position position="28"/>
    </location>
</feature>
<feature type="sequence conflict" description="In Ref. 2; AAB37262." evidence="9" ref="2">
    <original>H</original>
    <variation>D</variation>
    <location>
        <position position="57"/>
    </location>
</feature>
<feature type="sequence conflict" description="In Ref. 3; CAA65936." evidence="9" ref="3">
    <original>K</original>
    <variation>N</variation>
    <location>
        <position position="175"/>
    </location>
</feature>
<feature type="sequence conflict" description="In Ref. 2; AAB37262." evidence="9" ref="2">
    <original>A</original>
    <variation>S</variation>
    <location>
        <position position="191"/>
    </location>
</feature>
<feature type="sequence conflict" description="In Ref. 2; AAB37262." evidence="9" ref="2">
    <original>C</original>
    <variation>Y</variation>
    <location>
        <position position="282"/>
    </location>
</feature>
<feature type="sequence conflict" description="In Ref. 2; AAB37262." evidence="9" ref="2">
    <original>I</original>
    <variation>F</variation>
    <location>
        <position position="329"/>
    </location>
</feature>
<feature type="sequence conflict" description="In Ref. 2; AAB37262." evidence="9" ref="2">
    <original>E</original>
    <variation>D</variation>
    <location>
        <position position="349"/>
    </location>
</feature>
<dbReference type="EC" id="1.1.1.-" evidence="2"/>
<dbReference type="EMBL" id="AF033003">
    <property type="protein sequence ID" value="AAB87085.1"/>
    <property type="molecule type" value="mRNA"/>
</dbReference>
<dbReference type="EMBL" id="U65591">
    <property type="protein sequence ID" value="AAB37262.1"/>
    <property type="molecule type" value="mRNA"/>
</dbReference>
<dbReference type="EMBL" id="X97281">
    <property type="protein sequence ID" value="CAA65936.1"/>
    <property type="molecule type" value="mRNA"/>
</dbReference>
<dbReference type="EMBL" id="AK138467">
    <property type="protein sequence ID" value="BAE23670.1"/>
    <property type="molecule type" value="mRNA"/>
</dbReference>
<dbReference type="EMBL" id="CH466547">
    <property type="protein sequence ID" value="EDL15543.1"/>
    <property type="molecule type" value="Genomic_DNA"/>
</dbReference>
<dbReference type="EMBL" id="BC014701">
    <property type="protein sequence ID" value="AAH14701.1"/>
    <property type="molecule type" value="mRNA"/>
</dbReference>
<dbReference type="CCDS" id="CCDS38447.1"/>
<dbReference type="RefSeq" id="NP_034727.3">
    <property type="nucleotide sequence ID" value="NM_010597.4"/>
</dbReference>
<dbReference type="SMR" id="P63143"/>
<dbReference type="BioGRID" id="200883">
    <property type="interactions" value="9"/>
</dbReference>
<dbReference type="FunCoup" id="P63143">
    <property type="interactions" value="186"/>
</dbReference>
<dbReference type="IntAct" id="P63143">
    <property type="interactions" value="4"/>
</dbReference>
<dbReference type="MINT" id="P63143"/>
<dbReference type="STRING" id="10090.ENSMUSP00000047480"/>
<dbReference type="GlyGen" id="P63143">
    <property type="glycosylation" value="1 site, 1 O-linked glycan (1 site)"/>
</dbReference>
<dbReference type="iPTMnet" id="P63143"/>
<dbReference type="PhosphoSitePlus" id="P63143"/>
<dbReference type="SwissPalm" id="P63143"/>
<dbReference type="jPOST" id="P63143"/>
<dbReference type="PaxDb" id="10090-ENSMUSP00000047480"/>
<dbReference type="PeptideAtlas" id="P63143"/>
<dbReference type="ProteomicsDB" id="301755"/>
<dbReference type="Pumba" id="P63143"/>
<dbReference type="ABCD" id="P63143">
    <property type="antibodies" value="3 sequenced antibodies"/>
</dbReference>
<dbReference type="Antibodypedia" id="18386">
    <property type="antibodies" value="433 antibodies from 34 providers"/>
</dbReference>
<dbReference type="DNASU" id="16497"/>
<dbReference type="Ensembl" id="ENSMUST00000049230.11">
    <property type="protein sequence ID" value="ENSMUSP00000047480.9"/>
    <property type="gene ID" value="ENSMUSG00000027827.18"/>
</dbReference>
<dbReference type="GeneID" id="16497"/>
<dbReference type="KEGG" id="mmu:16497"/>
<dbReference type="UCSC" id="uc008pkj.2">
    <property type="organism name" value="mouse"/>
</dbReference>
<dbReference type="AGR" id="MGI:109155"/>
<dbReference type="CTD" id="7881"/>
<dbReference type="MGI" id="MGI:109155">
    <property type="gene designation" value="Kcnab1"/>
</dbReference>
<dbReference type="VEuPathDB" id="HostDB:ENSMUSG00000027827"/>
<dbReference type="eggNOG" id="KOG1575">
    <property type="taxonomic scope" value="Eukaryota"/>
</dbReference>
<dbReference type="GeneTree" id="ENSGT00940000156760"/>
<dbReference type="HOGENOM" id="CLU_023205_2_0_1"/>
<dbReference type="InParanoid" id="P63143"/>
<dbReference type="OMA" id="MWAGPYG"/>
<dbReference type="PhylomeDB" id="P63143"/>
<dbReference type="TreeFam" id="TF324563"/>
<dbReference type="Reactome" id="R-MMU-1296072">
    <property type="pathway name" value="Voltage gated Potassium channels"/>
</dbReference>
<dbReference type="BioGRID-ORCS" id="16497">
    <property type="hits" value="2 hits in 76 CRISPR screens"/>
</dbReference>
<dbReference type="CD-CODE" id="CE726F99">
    <property type="entry name" value="Postsynaptic density"/>
</dbReference>
<dbReference type="ChiTaRS" id="Kcnab1">
    <property type="organism name" value="mouse"/>
</dbReference>
<dbReference type="PRO" id="PR:P63143"/>
<dbReference type="Proteomes" id="UP000000589">
    <property type="component" value="Chromosome 3"/>
</dbReference>
<dbReference type="RNAct" id="P63143">
    <property type="molecule type" value="protein"/>
</dbReference>
<dbReference type="Bgee" id="ENSMUSG00000027827">
    <property type="expression patterns" value="Expressed in caudate-putamen and 173 other cell types or tissues"/>
</dbReference>
<dbReference type="ExpressionAtlas" id="P63143">
    <property type="expression patterns" value="baseline and differential"/>
</dbReference>
<dbReference type="GO" id="GO:0009898">
    <property type="term" value="C:cytoplasmic side of plasma membrane"/>
    <property type="evidence" value="ECO:0000250"/>
    <property type="project" value="UniProtKB"/>
</dbReference>
<dbReference type="GO" id="GO:0005829">
    <property type="term" value="C:cytosol"/>
    <property type="evidence" value="ECO:0000250"/>
    <property type="project" value="UniProtKB"/>
</dbReference>
<dbReference type="GO" id="GO:0034705">
    <property type="term" value="C:potassium channel complex"/>
    <property type="evidence" value="ECO:0000250"/>
    <property type="project" value="UniProtKB"/>
</dbReference>
<dbReference type="GO" id="GO:0008076">
    <property type="term" value="C:voltage-gated potassium channel complex"/>
    <property type="evidence" value="ECO:0000305"/>
    <property type="project" value="MGI"/>
</dbReference>
<dbReference type="GO" id="GO:0004033">
    <property type="term" value="F:aldo-keto reductase (NADPH) activity"/>
    <property type="evidence" value="ECO:0000250"/>
    <property type="project" value="UniProtKB"/>
</dbReference>
<dbReference type="GO" id="GO:0004090">
    <property type="term" value="F:carbonyl reductase (NADPH) activity"/>
    <property type="evidence" value="ECO:0007669"/>
    <property type="project" value="RHEA"/>
</dbReference>
<dbReference type="GO" id="GO:0140678">
    <property type="term" value="F:molecular function inhibitor activity"/>
    <property type="evidence" value="ECO:0007669"/>
    <property type="project" value="Ensembl"/>
</dbReference>
<dbReference type="GO" id="GO:0070402">
    <property type="term" value="F:NADPH binding"/>
    <property type="evidence" value="ECO:0000250"/>
    <property type="project" value="UniProtKB"/>
</dbReference>
<dbReference type="GO" id="GO:0015459">
    <property type="term" value="F:potassium channel regulator activity"/>
    <property type="evidence" value="ECO:0000250"/>
    <property type="project" value="UniProtKB"/>
</dbReference>
<dbReference type="GO" id="GO:0019904">
    <property type="term" value="F:protein domain specific binding"/>
    <property type="evidence" value="ECO:0007669"/>
    <property type="project" value="Ensembl"/>
</dbReference>
<dbReference type="GO" id="GO:0005249">
    <property type="term" value="F:voltage-gated potassium channel activity"/>
    <property type="evidence" value="ECO:0007669"/>
    <property type="project" value="InterPro"/>
</dbReference>
<dbReference type="GO" id="GO:0007611">
    <property type="term" value="P:learning or memory"/>
    <property type="evidence" value="ECO:0000315"/>
    <property type="project" value="MGI"/>
</dbReference>
<dbReference type="GO" id="GO:1902259">
    <property type="term" value="P:regulation of delayed rectifier potassium channel activity"/>
    <property type="evidence" value="ECO:0000250"/>
    <property type="project" value="UniProtKB"/>
</dbReference>
<dbReference type="GO" id="GO:1901379">
    <property type="term" value="P:regulation of potassium ion transmembrane transport"/>
    <property type="evidence" value="ECO:0000250"/>
    <property type="project" value="UniProtKB"/>
</dbReference>
<dbReference type="CDD" id="cd19159">
    <property type="entry name" value="AKR_KCAB1B_AKR6A3-like"/>
    <property type="match status" value="1"/>
</dbReference>
<dbReference type="FunFam" id="3.20.20.100:FF:000001">
    <property type="entry name" value="voltage-gated potassium channel subunit beta-2 isoform X2"/>
    <property type="match status" value="1"/>
</dbReference>
<dbReference type="Gene3D" id="3.20.20.100">
    <property type="entry name" value="NADP-dependent oxidoreductase domain"/>
    <property type="match status" value="1"/>
</dbReference>
<dbReference type="InterPro" id="IPR005983">
    <property type="entry name" value="K_chnl_volt-dep_bsu_KCNAB"/>
</dbReference>
<dbReference type="InterPro" id="IPR005399">
    <property type="entry name" value="K_chnl_volt-dep_bsu_KCNAB-rel"/>
</dbReference>
<dbReference type="InterPro" id="IPR005400">
    <property type="entry name" value="K_chnl_volt-dep_bsu_KCNAB1"/>
</dbReference>
<dbReference type="InterPro" id="IPR023210">
    <property type="entry name" value="NADP_OxRdtase_dom"/>
</dbReference>
<dbReference type="InterPro" id="IPR036812">
    <property type="entry name" value="NADP_OxRdtase_dom_sf"/>
</dbReference>
<dbReference type="NCBIfam" id="TIGR01293">
    <property type="entry name" value="Kv_beta"/>
    <property type="match status" value="1"/>
</dbReference>
<dbReference type="PANTHER" id="PTHR43150">
    <property type="entry name" value="HYPERKINETIC, ISOFORM M"/>
    <property type="match status" value="1"/>
</dbReference>
<dbReference type="PANTHER" id="PTHR43150:SF7">
    <property type="entry name" value="VOLTAGE-GATED POTASSIUM CHANNEL SUBUNIT BETA-1"/>
    <property type="match status" value="1"/>
</dbReference>
<dbReference type="Pfam" id="PF00248">
    <property type="entry name" value="Aldo_ket_red"/>
    <property type="match status" value="1"/>
</dbReference>
<dbReference type="PRINTS" id="PR01578">
    <property type="entry name" value="KCNAB1CHANEL"/>
</dbReference>
<dbReference type="PRINTS" id="PR01577">
    <property type="entry name" value="KCNABCHANNEL"/>
</dbReference>
<dbReference type="SUPFAM" id="SSF51430">
    <property type="entry name" value="NAD(P)-linked oxidoreductase"/>
    <property type="match status" value="1"/>
</dbReference>